<accession>D4ANB6</accession>
<feature type="signal peptide" evidence="3">
    <location>
        <begin position="1"/>
        <end position="25"/>
    </location>
</feature>
<feature type="chain" id="PRO_0000434922" description="Carboxypeptidase Y homolog ARB_05721">
    <location>
        <begin position="26"/>
        <end position="508"/>
    </location>
</feature>
<feature type="active site" evidence="1">
    <location>
        <position position="204"/>
    </location>
</feature>
<feature type="active site" evidence="2">
    <location>
        <position position="410"/>
    </location>
</feature>
<feature type="active site" evidence="1">
    <location>
        <position position="484"/>
    </location>
</feature>
<feature type="binding site" evidence="1">
    <location>
        <position position="413"/>
    </location>
    <ligand>
        <name>substrate</name>
    </ligand>
</feature>
<feature type="binding site" evidence="1">
    <location>
        <position position="485"/>
    </location>
    <ligand>
        <name>substrate</name>
    </ligand>
</feature>
<feature type="glycosylation site" description="N-linked (GlcNAc...) asparagine" evidence="4">
    <location>
        <position position="132"/>
    </location>
</feature>
<feature type="glycosylation site" description="N-linked (GlcNAc...) asparagine" evidence="4">
    <location>
        <position position="169"/>
    </location>
</feature>
<feature type="glycosylation site" description="N-linked (GlcNAc...) asparagine" evidence="4">
    <location>
        <position position="268"/>
    </location>
</feature>
<feature type="glycosylation site" description="N-linked (GlcNAc...) asparagine" evidence="4">
    <location>
        <position position="451"/>
    </location>
</feature>
<feature type="disulfide bond" evidence="1">
    <location>
        <begin position="282"/>
        <end position="305"/>
    </location>
</feature>
<feature type="disulfide bond" evidence="1">
    <location>
        <begin position="289"/>
        <end position="298"/>
    </location>
</feature>
<feature type="disulfide bond" evidence="1">
    <location>
        <begin position="332"/>
        <end position="338"/>
    </location>
</feature>
<organism>
    <name type="scientific">Arthroderma benhamiae (strain ATCC MYA-4681 / CBS 112371)</name>
    <name type="common">Trichophyton mentagrophytes</name>
    <dbReference type="NCBI Taxonomy" id="663331"/>
    <lineage>
        <taxon>Eukaryota</taxon>
        <taxon>Fungi</taxon>
        <taxon>Dikarya</taxon>
        <taxon>Ascomycota</taxon>
        <taxon>Pezizomycotina</taxon>
        <taxon>Eurotiomycetes</taxon>
        <taxon>Eurotiomycetidae</taxon>
        <taxon>Onygenales</taxon>
        <taxon>Arthrodermataceae</taxon>
        <taxon>Trichophyton</taxon>
    </lineage>
</organism>
<comment type="function">
    <text evidence="1">Involved in degradation of small peptides.</text>
</comment>
<comment type="catalytic activity">
    <reaction evidence="1">
        <text>Release of a C-terminal amino acid with broad specificity.</text>
        <dbReference type="EC" id="3.4.16.5"/>
    </reaction>
</comment>
<comment type="subcellular location">
    <subcellularLocation>
        <location evidence="5">Secreted</location>
    </subcellularLocation>
</comment>
<comment type="similarity">
    <text evidence="6">Belongs to the peptidase S10 family.</text>
</comment>
<dbReference type="EC" id="3.4.16.5" evidence="1"/>
<dbReference type="EMBL" id="ABSU01000003">
    <property type="protein sequence ID" value="EFE35677.1"/>
    <property type="molecule type" value="Genomic_DNA"/>
</dbReference>
<dbReference type="RefSeq" id="XP_003016322.1">
    <property type="nucleotide sequence ID" value="XM_003016276.1"/>
</dbReference>
<dbReference type="SMR" id="D4ANB6"/>
<dbReference type="ESTHER" id="trit1-f2s2t8">
    <property type="family name" value="Carboxypeptidase_S10"/>
</dbReference>
<dbReference type="GeneID" id="9521805"/>
<dbReference type="KEGG" id="abe:ARB_05721"/>
<dbReference type="eggNOG" id="KOG1282">
    <property type="taxonomic scope" value="Eukaryota"/>
</dbReference>
<dbReference type="HOGENOM" id="CLU_008523_10_4_1"/>
<dbReference type="OMA" id="ITAPCEI"/>
<dbReference type="Proteomes" id="UP000008866">
    <property type="component" value="Unassembled WGS sequence"/>
</dbReference>
<dbReference type="GO" id="GO:0005576">
    <property type="term" value="C:extracellular region"/>
    <property type="evidence" value="ECO:0007669"/>
    <property type="project" value="UniProtKB-SubCell"/>
</dbReference>
<dbReference type="GO" id="GO:0000324">
    <property type="term" value="C:fungal-type vacuole"/>
    <property type="evidence" value="ECO:0007669"/>
    <property type="project" value="TreeGrafter"/>
</dbReference>
<dbReference type="GO" id="GO:0004185">
    <property type="term" value="F:serine-type carboxypeptidase activity"/>
    <property type="evidence" value="ECO:0007669"/>
    <property type="project" value="UniProtKB-EC"/>
</dbReference>
<dbReference type="GO" id="GO:0006508">
    <property type="term" value="P:proteolysis"/>
    <property type="evidence" value="ECO:0007669"/>
    <property type="project" value="UniProtKB-KW"/>
</dbReference>
<dbReference type="Gene3D" id="1.10.287.410">
    <property type="match status" value="1"/>
</dbReference>
<dbReference type="Gene3D" id="3.40.50.1820">
    <property type="entry name" value="alpha/beta hydrolase"/>
    <property type="match status" value="1"/>
</dbReference>
<dbReference type="InterPro" id="IPR029058">
    <property type="entry name" value="AB_hydrolase_fold"/>
</dbReference>
<dbReference type="InterPro" id="IPR001563">
    <property type="entry name" value="Peptidase_S10"/>
</dbReference>
<dbReference type="InterPro" id="IPR018202">
    <property type="entry name" value="Ser_caboxypep_ser_AS"/>
</dbReference>
<dbReference type="PANTHER" id="PTHR11802">
    <property type="entry name" value="SERINE PROTEASE FAMILY S10 SERINE CARBOXYPEPTIDASE"/>
    <property type="match status" value="1"/>
</dbReference>
<dbReference type="PANTHER" id="PTHR11802:SF432">
    <property type="entry name" value="Y, PUTATIVE-RELATED"/>
    <property type="match status" value="1"/>
</dbReference>
<dbReference type="Pfam" id="PF00450">
    <property type="entry name" value="Peptidase_S10"/>
    <property type="match status" value="1"/>
</dbReference>
<dbReference type="PRINTS" id="PR00724">
    <property type="entry name" value="CRBOXYPTASEC"/>
</dbReference>
<dbReference type="SUPFAM" id="SSF53474">
    <property type="entry name" value="alpha/beta-Hydrolases"/>
    <property type="match status" value="1"/>
</dbReference>
<dbReference type="PROSITE" id="PS00131">
    <property type="entry name" value="CARBOXYPEPT_SER_SER"/>
    <property type="match status" value="1"/>
</dbReference>
<gene>
    <name type="ORF">ARB_05721</name>
</gene>
<proteinExistence type="evidence at protein level"/>
<name>CBPYB_ARTBC</name>
<sequence>MELYLNMLSFWYILLATSFFGPSQAVYQAPLSVDESQKVTIEEGFQIFTSKHSPQHSIRIKKQDGSICDAHSAQYTGWLDIGPKHLFFWYFESQNDPENDPLTLWMTGGPGYSSMLGMLEEVGPCLVNEYGNGTKYNPWGWSKKSSMLFVDQPVGVGFSYGDEGHDIPNDSYLAAVDMHRFLQLFISEVFPNKLNSPFHISGESYGGHYIPYLGAQIVRQNKLYPNEPQVQLKSCLIGNGCMSHMHTTFGYWETLCTTNPGVEKPIFNETRCDIMAKNMPRCMKVAEVCRRNPDPAICLSAQSVCDEGITGLYNKESDVKGGRNRFDITTPCQADDICYVQGLHLQNYLNTKLVWDALSPPKEVKEYKFASKNVEHAFGLTSDSMVPSTEEVEFLLSNQIHIMSYQGNLDLACNTAGNLKWMHDIPWKGQAELSSKALVPWKSVLASTGKNETVGRMKEVKIRVTDSATFATRYAFVTVDNAGHMVPQDRPDVAFDLMNRWISGETFV</sequence>
<protein>
    <recommendedName>
        <fullName evidence="6">Carboxypeptidase Y homolog ARB_05721</fullName>
        <ecNumber evidence="1">3.4.16.5</ecNumber>
    </recommendedName>
</protein>
<reference key="1">
    <citation type="journal article" date="2011" name="Genome Biol.">
        <title>Comparative and functional genomics provide insights into the pathogenicity of dermatophytic fungi.</title>
        <authorList>
            <person name="Burmester A."/>
            <person name="Shelest E."/>
            <person name="Gloeckner G."/>
            <person name="Heddergott C."/>
            <person name="Schindler S."/>
            <person name="Staib P."/>
            <person name="Heidel A."/>
            <person name="Felder M."/>
            <person name="Petzold A."/>
            <person name="Szafranski K."/>
            <person name="Feuermann M."/>
            <person name="Pedruzzi I."/>
            <person name="Priebe S."/>
            <person name="Groth M."/>
            <person name="Winkler R."/>
            <person name="Li W."/>
            <person name="Kniemeyer O."/>
            <person name="Schroeckh V."/>
            <person name="Hertweck C."/>
            <person name="Hube B."/>
            <person name="White T.C."/>
            <person name="Platzer M."/>
            <person name="Guthke R."/>
            <person name="Heitman J."/>
            <person name="Woestemeyer J."/>
            <person name="Zipfel P.F."/>
            <person name="Monod M."/>
            <person name="Brakhage A.A."/>
        </authorList>
    </citation>
    <scope>NUCLEOTIDE SEQUENCE [LARGE SCALE GENOMIC DNA]</scope>
    <source>
        <strain>ATCC MYA-4681 / CBS 112371</strain>
    </source>
</reference>
<reference key="2">
    <citation type="journal article" date="2011" name="Proteomics">
        <title>Identification of novel secreted proteases during extracellular proteolysis by dermatophytes at acidic pH.</title>
        <authorList>
            <person name="Sriranganadane D."/>
            <person name="Waridel P."/>
            <person name="Salamin K."/>
            <person name="Feuermann M."/>
            <person name="Mignon B."/>
            <person name="Staib P."/>
            <person name="Neuhaus J.M."/>
            <person name="Quadroni M."/>
            <person name="Monod M."/>
        </authorList>
    </citation>
    <scope>IDENTIFICATION BY MASS SPECTROMETRY</scope>
    <scope>SUBCELLULAR LOCATION</scope>
</reference>
<evidence type="ECO:0000250" key="1">
    <source>
        <dbReference type="UniProtKB" id="P00729"/>
    </source>
</evidence>
<evidence type="ECO:0000250" key="2">
    <source>
        <dbReference type="UniProtKB" id="P08819"/>
    </source>
</evidence>
<evidence type="ECO:0000255" key="3"/>
<evidence type="ECO:0000255" key="4">
    <source>
        <dbReference type="PROSITE-ProRule" id="PRU00498"/>
    </source>
</evidence>
<evidence type="ECO:0000269" key="5">
    <source>
    </source>
</evidence>
<evidence type="ECO:0000305" key="6"/>
<keyword id="KW-0121">Carboxypeptidase</keyword>
<keyword id="KW-1015">Disulfide bond</keyword>
<keyword id="KW-0325">Glycoprotein</keyword>
<keyword id="KW-0378">Hydrolase</keyword>
<keyword id="KW-0645">Protease</keyword>
<keyword id="KW-1185">Reference proteome</keyword>
<keyword id="KW-0964">Secreted</keyword>
<keyword id="KW-0732">Signal</keyword>